<sequence length="184" mass="19066">MSTDKSPYAAFSALLASSGRDRSPAELHGQLLGRSCAGAGFEVDAWLADAADLLGGQIPDNVRQALIGLQEMVKGELTGGEVAVVLLLPSDEAPLAERAAALGQWCQGFLGGFGLAAGDRPLSAEAMEVLQDLAAISQVQSALEDSEEGEGAYMEVMEYLRVAPLLLFTECAGPVAPAPKPSVH</sequence>
<proteinExistence type="inferred from homology"/>
<gene>
    <name type="ordered locus">Avin_47340</name>
</gene>
<dbReference type="EMBL" id="CP001157">
    <property type="protein sequence ID" value="ACO80839.1"/>
    <property type="molecule type" value="Genomic_DNA"/>
</dbReference>
<dbReference type="RefSeq" id="WP_012703201.1">
    <property type="nucleotide sequence ID" value="NC_012560.1"/>
</dbReference>
<dbReference type="SMR" id="C1DJ20"/>
<dbReference type="STRING" id="322710.Avin_47340"/>
<dbReference type="EnsemblBacteria" id="ACO80839">
    <property type="protein sequence ID" value="ACO80839"/>
    <property type="gene ID" value="Avin_47340"/>
</dbReference>
<dbReference type="GeneID" id="88187609"/>
<dbReference type="KEGG" id="avn:Avin_47340"/>
<dbReference type="eggNOG" id="COG3079">
    <property type="taxonomic scope" value="Bacteria"/>
</dbReference>
<dbReference type="HOGENOM" id="CLU_085336_0_0_6"/>
<dbReference type="OrthoDB" id="9783391at2"/>
<dbReference type="Proteomes" id="UP000002424">
    <property type="component" value="Chromosome"/>
</dbReference>
<dbReference type="GO" id="GO:0005829">
    <property type="term" value="C:cytosol"/>
    <property type="evidence" value="ECO:0007669"/>
    <property type="project" value="TreeGrafter"/>
</dbReference>
<dbReference type="Gene3D" id="1.20.120.740">
    <property type="entry name" value="YgfB uncharacterised protein family UPF0149, PF03695"/>
    <property type="match status" value="1"/>
</dbReference>
<dbReference type="HAMAP" id="MF_00346">
    <property type="entry name" value="UPF0149"/>
    <property type="match status" value="1"/>
</dbReference>
<dbReference type="InterPro" id="IPR011978">
    <property type="entry name" value="YgfB-like"/>
</dbReference>
<dbReference type="InterPro" id="IPR036255">
    <property type="entry name" value="YgfB-like_sf"/>
</dbReference>
<dbReference type="NCBIfam" id="NF002562">
    <property type="entry name" value="PRK02166.1"/>
    <property type="match status" value="1"/>
</dbReference>
<dbReference type="PANTHER" id="PTHR37528">
    <property type="entry name" value="UPF0149 PROTEIN YGFB"/>
    <property type="match status" value="1"/>
</dbReference>
<dbReference type="PANTHER" id="PTHR37528:SF1">
    <property type="entry name" value="UPF0149 PROTEIN YGFB"/>
    <property type="match status" value="1"/>
</dbReference>
<dbReference type="Pfam" id="PF03695">
    <property type="entry name" value="UPF0149"/>
    <property type="match status" value="1"/>
</dbReference>
<dbReference type="SUPFAM" id="SSF101327">
    <property type="entry name" value="YgfB-like"/>
    <property type="match status" value="1"/>
</dbReference>
<evidence type="ECO:0000255" key="1">
    <source>
        <dbReference type="HAMAP-Rule" id="MF_00346"/>
    </source>
</evidence>
<name>Y4734_AZOVD</name>
<reference key="1">
    <citation type="journal article" date="2009" name="J. Bacteriol.">
        <title>Genome sequence of Azotobacter vinelandii, an obligate aerobe specialized to support diverse anaerobic metabolic processes.</title>
        <authorList>
            <person name="Setubal J.C."/>
            <person name="Dos Santos P."/>
            <person name="Goldman B.S."/>
            <person name="Ertesvaag H."/>
            <person name="Espin G."/>
            <person name="Rubio L.M."/>
            <person name="Valla S."/>
            <person name="Almeida N.F."/>
            <person name="Balasubramanian D."/>
            <person name="Cromes L."/>
            <person name="Curatti L."/>
            <person name="Du Z."/>
            <person name="Godsy E."/>
            <person name="Goodner B."/>
            <person name="Hellner-Burris K."/>
            <person name="Hernandez J.A."/>
            <person name="Houmiel K."/>
            <person name="Imperial J."/>
            <person name="Kennedy C."/>
            <person name="Larson T.J."/>
            <person name="Latreille P."/>
            <person name="Ligon L.S."/>
            <person name="Lu J."/>
            <person name="Maerk M."/>
            <person name="Miller N.M."/>
            <person name="Norton S."/>
            <person name="O'Carroll I.P."/>
            <person name="Paulsen I."/>
            <person name="Raulfs E.C."/>
            <person name="Roemer R."/>
            <person name="Rosser J."/>
            <person name="Segura D."/>
            <person name="Slater S."/>
            <person name="Stricklin S.L."/>
            <person name="Studholme D.J."/>
            <person name="Sun J."/>
            <person name="Viana C.J."/>
            <person name="Wallin E."/>
            <person name="Wang B."/>
            <person name="Wheeler C."/>
            <person name="Zhu H."/>
            <person name="Dean D.R."/>
            <person name="Dixon R."/>
            <person name="Wood D."/>
        </authorList>
    </citation>
    <scope>NUCLEOTIDE SEQUENCE [LARGE SCALE GENOMIC DNA]</scope>
    <source>
        <strain>DJ / ATCC BAA-1303</strain>
    </source>
</reference>
<accession>C1DJ20</accession>
<protein>
    <recommendedName>
        <fullName evidence="1">UPF0149 protein Avin_47340</fullName>
    </recommendedName>
</protein>
<organism>
    <name type="scientific">Azotobacter vinelandii (strain DJ / ATCC BAA-1303)</name>
    <dbReference type="NCBI Taxonomy" id="322710"/>
    <lineage>
        <taxon>Bacteria</taxon>
        <taxon>Pseudomonadati</taxon>
        <taxon>Pseudomonadota</taxon>
        <taxon>Gammaproteobacteria</taxon>
        <taxon>Pseudomonadales</taxon>
        <taxon>Pseudomonadaceae</taxon>
        <taxon>Azotobacter</taxon>
    </lineage>
</organism>
<feature type="chain" id="PRO_1000205320" description="UPF0149 protein Avin_47340">
    <location>
        <begin position="1"/>
        <end position="184"/>
    </location>
</feature>
<comment type="similarity">
    <text evidence="1">Belongs to the UPF0149 family.</text>
</comment>